<feature type="chain" id="PRO_0000204572" description="Probable anaerobic glycerol-3-phosphate dehydrogenase subunit B">
    <location>
        <begin position="1"/>
        <end position="427"/>
    </location>
</feature>
<reference key="1">
    <citation type="journal article" date="2000" name="Proc. Natl. Acad. Sci. U.S.A.">
        <title>Genome sequence of Halobacterium species NRC-1.</title>
        <authorList>
            <person name="Ng W.V."/>
            <person name="Kennedy S.P."/>
            <person name="Mahairas G.G."/>
            <person name="Berquist B."/>
            <person name="Pan M."/>
            <person name="Shukla H.D."/>
            <person name="Lasky S.R."/>
            <person name="Baliga N.S."/>
            <person name="Thorsson V."/>
            <person name="Sbrogna J."/>
            <person name="Swartzell S."/>
            <person name="Weir D."/>
            <person name="Hall J."/>
            <person name="Dahl T.A."/>
            <person name="Welti R."/>
            <person name="Goo Y.A."/>
            <person name="Leithauser B."/>
            <person name="Keller K."/>
            <person name="Cruz R."/>
            <person name="Danson M.J."/>
            <person name="Hough D.W."/>
            <person name="Maddocks D.G."/>
            <person name="Jablonski P.E."/>
            <person name="Krebs M.P."/>
            <person name="Angevine C.M."/>
            <person name="Dale H."/>
            <person name="Isenbarger T.A."/>
            <person name="Peck R.F."/>
            <person name="Pohlschroder M."/>
            <person name="Spudich J.L."/>
            <person name="Jung K.-H."/>
            <person name="Alam M."/>
            <person name="Freitas T."/>
            <person name="Hou S."/>
            <person name="Daniels C.J."/>
            <person name="Dennis P.P."/>
            <person name="Omer A.D."/>
            <person name="Ebhardt H."/>
            <person name="Lowe T.M."/>
            <person name="Liang P."/>
            <person name="Riley M."/>
            <person name="Hood L."/>
            <person name="DasSarma S."/>
        </authorList>
    </citation>
    <scope>NUCLEOTIDE SEQUENCE [LARGE SCALE GENOMIC DNA]</scope>
    <source>
        <strain>ATCC 700922 / JCM 11081 / NRC-1</strain>
    </source>
</reference>
<accession>Q9HNS3</accession>
<organism>
    <name type="scientific">Halobacterium salinarum (strain ATCC 700922 / JCM 11081 / NRC-1)</name>
    <name type="common">Halobacterium halobium</name>
    <dbReference type="NCBI Taxonomy" id="64091"/>
    <lineage>
        <taxon>Archaea</taxon>
        <taxon>Methanobacteriati</taxon>
        <taxon>Methanobacteriota</taxon>
        <taxon>Stenosarchaea group</taxon>
        <taxon>Halobacteria</taxon>
        <taxon>Halobacteriales</taxon>
        <taxon>Halobacteriaceae</taxon>
        <taxon>Halobacterium</taxon>
        <taxon>Halobacterium salinarum NRC-34001</taxon>
    </lineage>
</organism>
<evidence type="ECO:0000255" key="1">
    <source>
        <dbReference type="HAMAP-Rule" id="MF_00753"/>
    </source>
</evidence>
<gene>
    <name evidence="1" type="primary">glpB</name>
    <name type="synonym">gpdB</name>
    <name type="ordered locus">VNG_1971G</name>
</gene>
<sequence>MAIESEVLVIGGGLAGITSALAAADAGADTRLVSYKQSTLRNASGLVDVLGYTPSGDGPVVDPFDAIPSLPDAHPYRTVGVDTVRDAMAFFDAHAPRYQGHHTDANALVPTHGGTVKPTARYPASAAAGLASDDRDTLLVGFETLPDFNADHAAAHLESAGVPFDVRGVTVPFPGDLRAGAKVTRYAGLLDANPQVSVDGTERPLRLALATRVADAAADADRVGFPAVLGDDDPAGVRDALADHLGAAVFEVPMGPPSLPGLRLSDHLFGALEAAGVRIETGNPVVDADTTAGGVETVYVEKNGARIPNSADEYVLATGGLVGKGIDSDRDAVYEPIFDCRIAHSDDRYAWFDDDAFGDHAFAQFGVRTDDTLRPRDDDGAAAHANLRAAGAVLGGYNFAAEHSGSGVSIATGYAAGTAAAEAIHDE</sequence>
<proteinExistence type="inferred from homology"/>
<protein>
    <recommendedName>
        <fullName evidence="1">Probable anaerobic glycerol-3-phosphate dehydrogenase subunit B</fullName>
        <shortName evidence="1">Anaerobic G-3-P dehydrogenase subunit B</shortName>
        <shortName evidence="1">Anaerobic G3Pdhase B</shortName>
        <ecNumber evidence="1">1.1.5.3</ecNumber>
    </recommendedName>
</protein>
<name>GLPB_HALSA</name>
<keyword id="KW-0285">Flavoprotein</keyword>
<keyword id="KW-0288">FMN</keyword>
<keyword id="KW-0560">Oxidoreductase</keyword>
<keyword id="KW-1185">Reference proteome</keyword>
<dbReference type="EC" id="1.1.5.3" evidence="1"/>
<dbReference type="EMBL" id="AE004437">
    <property type="protein sequence ID" value="AAG20147.1"/>
    <property type="molecule type" value="Genomic_DNA"/>
</dbReference>
<dbReference type="PIR" id="G84347">
    <property type="entry name" value="G84347"/>
</dbReference>
<dbReference type="RefSeq" id="WP_010903448.1">
    <property type="nucleotide sequence ID" value="NC_002607.1"/>
</dbReference>
<dbReference type="STRING" id="64091.VNG_1971G"/>
<dbReference type="PaxDb" id="64091-VNG_1971G"/>
<dbReference type="GeneID" id="68694571"/>
<dbReference type="KEGG" id="hal:VNG_1971G"/>
<dbReference type="PATRIC" id="fig|64091.14.peg.1506"/>
<dbReference type="HOGENOM" id="CLU_047793_1_0_2"/>
<dbReference type="InParanoid" id="Q9HNS3"/>
<dbReference type="OrthoDB" id="197288at2157"/>
<dbReference type="UniPathway" id="UPA00618">
    <property type="reaction ID" value="UER00673"/>
</dbReference>
<dbReference type="Proteomes" id="UP000000554">
    <property type="component" value="Chromosome"/>
</dbReference>
<dbReference type="GO" id="GO:0009331">
    <property type="term" value="C:glycerol-3-phosphate dehydrogenase (FAD) complex"/>
    <property type="evidence" value="ECO:0007669"/>
    <property type="project" value="InterPro"/>
</dbReference>
<dbReference type="GO" id="GO:0004368">
    <property type="term" value="F:glycerol-3-phosphate dehydrogenase (quinone) activity"/>
    <property type="evidence" value="ECO:0007669"/>
    <property type="project" value="UniProtKB-UniRule"/>
</dbReference>
<dbReference type="GO" id="GO:0019563">
    <property type="term" value="P:glycerol catabolic process"/>
    <property type="evidence" value="ECO:0007669"/>
    <property type="project" value="UniProtKB-UniPathway"/>
</dbReference>
<dbReference type="Gene3D" id="3.50.50.60">
    <property type="entry name" value="FAD/NAD(P)-binding domain"/>
    <property type="match status" value="1"/>
</dbReference>
<dbReference type="HAMAP" id="MF_00753">
    <property type="entry name" value="Glycerol3P_GlpB"/>
    <property type="match status" value="1"/>
</dbReference>
<dbReference type="InterPro" id="IPR003953">
    <property type="entry name" value="FAD-dep_OxRdtase_2_FAD-bd"/>
</dbReference>
<dbReference type="InterPro" id="IPR050315">
    <property type="entry name" value="FAD-oxidoreductase_2"/>
</dbReference>
<dbReference type="InterPro" id="IPR036188">
    <property type="entry name" value="FAD/NAD-bd_sf"/>
</dbReference>
<dbReference type="InterPro" id="IPR009158">
    <property type="entry name" value="G3P_DH_GlpB_su"/>
</dbReference>
<dbReference type="NCBIfam" id="TIGR03378">
    <property type="entry name" value="glycerol3P_GlpB"/>
    <property type="match status" value="1"/>
</dbReference>
<dbReference type="NCBIfam" id="NF003722">
    <property type="entry name" value="PRK05329.1-5"/>
    <property type="match status" value="1"/>
</dbReference>
<dbReference type="PANTHER" id="PTHR43400:SF11">
    <property type="entry name" value="ANAEROBIC GLYCEROL-3-PHOSPHATE DEHYDROGENASE SUBUNIT B"/>
    <property type="match status" value="1"/>
</dbReference>
<dbReference type="PANTHER" id="PTHR43400">
    <property type="entry name" value="FUMARATE REDUCTASE"/>
    <property type="match status" value="1"/>
</dbReference>
<dbReference type="Pfam" id="PF00890">
    <property type="entry name" value="FAD_binding_2"/>
    <property type="match status" value="1"/>
</dbReference>
<dbReference type="PIRSF" id="PIRSF000141">
    <property type="entry name" value="Anaerobic_G3P_dh"/>
    <property type="match status" value="1"/>
</dbReference>
<dbReference type="PRINTS" id="PR00411">
    <property type="entry name" value="PNDRDTASEI"/>
</dbReference>
<dbReference type="SUPFAM" id="SSF51905">
    <property type="entry name" value="FAD/NAD(P)-binding domain"/>
    <property type="match status" value="1"/>
</dbReference>
<comment type="catalytic activity">
    <reaction evidence="1">
        <text>a quinone + sn-glycerol 3-phosphate = dihydroxyacetone phosphate + a quinol</text>
        <dbReference type="Rhea" id="RHEA:18977"/>
        <dbReference type="ChEBI" id="CHEBI:24646"/>
        <dbReference type="ChEBI" id="CHEBI:57597"/>
        <dbReference type="ChEBI" id="CHEBI:57642"/>
        <dbReference type="ChEBI" id="CHEBI:132124"/>
        <dbReference type="EC" id="1.1.5.3"/>
    </reaction>
</comment>
<comment type="cofactor">
    <cofactor evidence="1">
        <name>FMN</name>
        <dbReference type="ChEBI" id="CHEBI:58210"/>
    </cofactor>
</comment>
<comment type="pathway">
    <text evidence="1">Polyol metabolism; glycerol degradation via glycerol kinase pathway; glycerone phosphate from sn-glycerol 3-phosphate (anaerobic route): step 1/1.</text>
</comment>
<comment type="similarity">
    <text evidence="1">Belongs to the anaerobic G-3-P dehydrogenase subunit B family.</text>
</comment>